<keyword id="KW-0175">Coiled coil</keyword>
<keyword id="KW-0217">Developmental protein</keyword>
<keyword id="KW-0256">Endoplasmic reticulum</keyword>
<keyword id="KW-0472">Membrane</keyword>
<keyword id="KW-0732">Signal</keyword>
<keyword id="KW-0812">Transmembrane</keyword>
<keyword id="KW-1133">Transmembrane helix</keyword>
<proteinExistence type="inferred from homology"/>
<reference evidence="5" key="1">
    <citation type="journal article" date="2007" name="Nature">
        <title>Evolution of genes and genomes on the Drosophila phylogeny.</title>
        <authorList>
            <consortium name="Drosophila 12 genomes consortium"/>
        </authorList>
    </citation>
    <scope>NUCLEOTIDE SEQUENCE [LARGE SCALE GENOMIC DNA]</scope>
    <source>
        <strain evidence="5">Tucson 14021-0224.01</strain>
    </source>
</reference>
<sequence>MRDQFISLALMLCILHSACGLYFHISETERKCFIEEVPDETTVIVNYKVELYDPRSNGFMPSSPGIGMHVEVRDSDDKIVLSRVYSSQGRISFTSHTPGEHVICMYSNSTAWFSGAQLRVHLDIQVGEHAIDYANVAQKEKLTELQLRIRQLLDQVEQITKEQNYQRYREERFRHTSESTNSRVLWWSLAQTVVLVCMGFWQMRHLKSFFEAKKLV</sequence>
<evidence type="ECO:0000250" key="1"/>
<evidence type="ECO:0000250" key="2">
    <source>
        <dbReference type="UniProtKB" id="Q8SXY6"/>
    </source>
</evidence>
<evidence type="ECO:0000255" key="3"/>
<evidence type="ECO:0000255" key="4">
    <source>
        <dbReference type="PROSITE-ProRule" id="PRU00096"/>
    </source>
</evidence>
<evidence type="ECO:0000312" key="5">
    <source>
        <dbReference type="EMBL" id="EDV49735.1"/>
    </source>
</evidence>
<organism>
    <name type="scientific">Drosophila erecta</name>
    <name type="common">Fruit fly</name>
    <dbReference type="NCBI Taxonomy" id="7220"/>
    <lineage>
        <taxon>Eukaryota</taxon>
        <taxon>Metazoa</taxon>
        <taxon>Ecdysozoa</taxon>
        <taxon>Arthropoda</taxon>
        <taxon>Hexapoda</taxon>
        <taxon>Insecta</taxon>
        <taxon>Pterygota</taxon>
        <taxon>Neoptera</taxon>
        <taxon>Endopterygota</taxon>
        <taxon>Diptera</taxon>
        <taxon>Brachycera</taxon>
        <taxon>Muscomorpha</taxon>
        <taxon>Ephydroidea</taxon>
        <taxon>Drosophilidae</taxon>
        <taxon>Drosophila</taxon>
        <taxon>Sophophora</taxon>
    </lineage>
</organism>
<accession>B3NZM5</accession>
<protein>
    <recommendedName>
        <fullName evidence="2">Transmembrane emp24 domain-containing protein eca</fullName>
    </recommendedName>
</protein>
<name>TMEDE_DROER</name>
<dbReference type="EMBL" id="CH954181">
    <property type="protein sequence ID" value="EDV49735.1"/>
    <property type="molecule type" value="Genomic_DNA"/>
</dbReference>
<dbReference type="SMR" id="B3NZM5"/>
<dbReference type="EnsemblMetazoa" id="FBtr0137397">
    <property type="protein sequence ID" value="FBpp0135889"/>
    <property type="gene ID" value="FBgn0109570"/>
</dbReference>
<dbReference type="EnsemblMetazoa" id="XM_001980741.3">
    <property type="protein sequence ID" value="XP_001980777.1"/>
    <property type="gene ID" value="LOC6552422"/>
</dbReference>
<dbReference type="GeneID" id="6552422"/>
<dbReference type="KEGG" id="der:6552422"/>
<dbReference type="CTD" id="41177"/>
<dbReference type="eggNOG" id="KOG1690">
    <property type="taxonomic scope" value="Eukaryota"/>
</dbReference>
<dbReference type="HOGENOM" id="CLU_066963_2_2_1"/>
<dbReference type="OMA" id="GATCAWQ"/>
<dbReference type="OrthoDB" id="3427at2759"/>
<dbReference type="PhylomeDB" id="B3NZM5"/>
<dbReference type="Proteomes" id="UP000008711">
    <property type="component" value="Unassembled WGS sequence"/>
</dbReference>
<dbReference type="GO" id="GO:0005789">
    <property type="term" value="C:endoplasmic reticulum membrane"/>
    <property type="evidence" value="ECO:0007669"/>
    <property type="project" value="UniProtKB-SubCell"/>
</dbReference>
<dbReference type="GO" id="GO:0009953">
    <property type="term" value="P:dorsal/ventral pattern formation"/>
    <property type="evidence" value="ECO:0000250"/>
    <property type="project" value="UniProtKB"/>
</dbReference>
<dbReference type="InterPro" id="IPR015720">
    <property type="entry name" value="Emp24-like"/>
</dbReference>
<dbReference type="InterPro" id="IPR009038">
    <property type="entry name" value="GOLD_dom"/>
</dbReference>
<dbReference type="PANTHER" id="PTHR22811">
    <property type="entry name" value="TRANSMEMBRANE EMP24 DOMAIN-CONTAINING PROTEIN"/>
    <property type="match status" value="1"/>
</dbReference>
<dbReference type="Pfam" id="PF01105">
    <property type="entry name" value="EMP24_GP25L"/>
    <property type="match status" value="1"/>
</dbReference>
<dbReference type="SMART" id="SM01190">
    <property type="entry name" value="EMP24_GP25L"/>
    <property type="match status" value="1"/>
</dbReference>
<dbReference type="PROSITE" id="PS50866">
    <property type="entry name" value="GOLD"/>
    <property type="match status" value="1"/>
</dbReference>
<gene>
    <name evidence="2" type="primary">eca</name>
    <name type="ORF">GG17343</name>
</gene>
<feature type="signal peptide" evidence="3">
    <location>
        <begin position="1"/>
        <end position="20"/>
    </location>
</feature>
<feature type="chain" id="PRO_0000393925" description="Transmembrane emp24 domain-containing protein eca" evidence="3">
    <location>
        <begin position="21"/>
        <end position="216"/>
    </location>
</feature>
<feature type="topological domain" description="Lumenal" evidence="3">
    <location>
        <begin position="21"/>
        <end position="182"/>
    </location>
</feature>
<feature type="transmembrane region" description="Helical" evidence="3">
    <location>
        <begin position="183"/>
        <end position="203"/>
    </location>
</feature>
<feature type="topological domain" description="Cytoplasmic" evidence="3">
    <location>
        <begin position="204"/>
        <end position="216"/>
    </location>
</feature>
<feature type="domain" description="GOLD" evidence="4">
    <location>
        <begin position="30"/>
        <end position="126"/>
    </location>
</feature>
<feature type="coiled-coil region" evidence="3">
    <location>
        <begin position="134"/>
        <end position="164"/>
    </location>
</feature>
<feature type="short sequence motif" description="Prevents secretion from ER" evidence="3">
    <location>
        <begin position="213"/>
        <end position="216"/>
    </location>
</feature>
<comment type="function">
    <text evidence="1">Eca and bai are essential, though not redundant, for dorsoventral patterning of the embryo. Specifically required during early embryogenesis for the activity of maternal tkv, while the zygotic tkv is not affected. Involved in Golgi organization (By similarity).</text>
</comment>
<comment type="subcellular location">
    <subcellularLocation>
        <location evidence="3">Endoplasmic reticulum membrane</location>
        <topology evidence="3">Single-pass type I membrane protein</topology>
    </subcellularLocation>
</comment>
<comment type="similarity">
    <text evidence="3">Belongs to the EMP24/GP25L family.</text>
</comment>